<protein>
    <recommendedName>
        <fullName>Peptidyl-prolyl cis-trans isomerase FKBP14</fullName>
        <shortName>PPIase FKBP14</shortName>
        <ecNumber evidence="2">5.2.1.8</ecNumber>
    </recommendedName>
    <alternativeName>
        <fullName>FK506-binding protein 14</fullName>
        <shortName>FKBP-14</shortName>
    </alternativeName>
    <alternativeName>
        <fullName>Rotamase</fullName>
    </alternativeName>
</protein>
<name>FKB14_MOUSE</name>
<proteinExistence type="evidence at protein level"/>
<dbReference type="EC" id="5.2.1.8" evidence="2"/>
<dbReference type="EMBL" id="BC029109">
    <property type="protein sequence ID" value="AAH29109.1"/>
    <property type="molecule type" value="mRNA"/>
</dbReference>
<dbReference type="CCDS" id="CCDS20157.1"/>
<dbReference type="RefSeq" id="NP_705801.1">
    <property type="nucleotide sequence ID" value="NM_153573.2"/>
</dbReference>
<dbReference type="SMR" id="P59024"/>
<dbReference type="BioGRID" id="231206">
    <property type="interactions" value="1"/>
</dbReference>
<dbReference type="FunCoup" id="P59024">
    <property type="interactions" value="132"/>
</dbReference>
<dbReference type="STRING" id="10090.ENSMUSP00000046070"/>
<dbReference type="GlyConnect" id="2578">
    <property type="glycosylation" value="1 N-Linked glycan (1 site)"/>
</dbReference>
<dbReference type="GlyCosmos" id="P59024">
    <property type="glycosylation" value="1 site, 1 glycan"/>
</dbReference>
<dbReference type="GlyGen" id="P59024">
    <property type="glycosylation" value="1 site, 2 N-linked glycans (1 site)"/>
</dbReference>
<dbReference type="iPTMnet" id="P59024"/>
<dbReference type="PhosphoSitePlus" id="P59024"/>
<dbReference type="PaxDb" id="10090-ENSMUSP00000046070"/>
<dbReference type="PeptideAtlas" id="P59024"/>
<dbReference type="ProteomicsDB" id="271892"/>
<dbReference type="Pumba" id="P59024"/>
<dbReference type="Antibodypedia" id="2831">
    <property type="antibodies" value="206 antibodies from 26 providers"/>
</dbReference>
<dbReference type="DNASU" id="231997"/>
<dbReference type="Ensembl" id="ENSMUST00000046520.13">
    <property type="protein sequence ID" value="ENSMUSP00000046070.7"/>
    <property type="gene ID" value="ENSMUSG00000038074.17"/>
</dbReference>
<dbReference type="GeneID" id="231997"/>
<dbReference type="KEGG" id="mmu:231997"/>
<dbReference type="UCSC" id="uc009bzy.1">
    <property type="organism name" value="mouse"/>
</dbReference>
<dbReference type="AGR" id="MGI:2387639"/>
<dbReference type="CTD" id="55033"/>
<dbReference type="MGI" id="MGI:2387639">
    <property type="gene designation" value="Fkbp14"/>
</dbReference>
<dbReference type="VEuPathDB" id="HostDB:ENSMUSG00000038074"/>
<dbReference type="eggNOG" id="KOG0549">
    <property type="taxonomic scope" value="Eukaryota"/>
</dbReference>
<dbReference type="GeneTree" id="ENSGT00940000157858"/>
<dbReference type="HOGENOM" id="CLU_013615_5_0_1"/>
<dbReference type="InParanoid" id="P59024"/>
<dbReference type="OMA" id="KQMCVGE"/>
<dbReference type="OrthoDB" id="1902587at2759"/>
<dbReference type="PhylomeDB" id="P59024"/>
<dbReference type="TreeFam" id="TF105296"/>
<dbReference type="BioGRID-ORCS" id="231997">
    <property type="hits" value="1 hit in 79 CRISPR screens"/>
</dbReference>
<dbReference type="ChiTaRS" id="Fkbp14">
    <property type="organism name" value="mouse"/>
</dbReference>
<dbReference type="PRO" id="PR:P59024"/>
<dbReference type="Proteomes" id="UP000000589">
    <property type="component" value="Chromosome 6"/>
</dbReference>
<dbReference type="RNAct" id="P59024">
    <property type="molecule type" value="protein"/>
</dbReference>
<dbReference type="Bgee" id="ENSMUSG00000038074">
    <property type="expression patterns" value="Expressed in humerus cartilage element and 237 other cell types or tissues"/>
</dbReference>
<dbReference type="ExpressionAtlas" id="P59024">
    <property type="expression patterns" value="baseline and differential"/>
</dbReference>
<dbReference type="GO" id="GO:0005788">
    <property type="term" value="C:endoplasmic reticulum lumen"/>
    <property type="evidence" value="ECO:0007669"/>
    <property type="project" value="UniProtKB-SubCell"/>
</dbReference>
<dbReference type="GO" id="GO:0005509">
    <property type="term" value="F:calcium ion binding"/>
    <property type="evidence" value="ECO:0007669"/>
    <property type="project" value="InterPro"/>
</dbReference>
<dbReference type="GO" id="GO:0003755">
    <property type="term" value="F:peptidyl-prolyl cis-trans isomerase activity"/>
    <property type="evidence" value="ECO:0007669"/>
    <property type="project" value="UniProtKB-KW"/>
</dbReference>
<dbReference type="FunFam" id="3.10.50.40:FF:000006">
    <property type="entry name" value="Peptidyl-prolyl cis-trans isomerase"/>
    <property type="match status" value="1"/>
</dbReference>
<dbReference type="FunFam" id="1.10.238.10:FF:000118">
    <property type="entry name" value="Peptidylprolyl isomerase"/>
    <property type="match status" value="1"/>
</dbReference>
<dbReference type="Gene3D" id="3.10.50.40">
    <property type="match status" value="1"/>
</dbReference>
<dbReference type="Gene3D" id="1.10.238.10">
    <property type="entry name" value="EF-hand"/>
    <property type="match status" value="1"/>
</dbReference>
<dbReference type="InterPro" id="IPR011992">
    <property type="entry name" value="EF-hand-dom_pair"/>
</dbReference>
<dbReference type="InterPro" id="IPR018247">
    <property type="entry name" value="EF_Hand_1_Ca_BS"/>
</dbReference>
<dbReference type="InterPro" id="IPR002048">
    <property type="entry name" value="EF_hand_dom"/>
</dbReference>
<dbReference type="InterPro" id="IPR046357">
    <property type="entry name" value="PPIase_dom_sf"/>
</dbReference>
<dbReference type="InterPro" id="IPR052273">
    <property type="entry name" value="PPIase_FKBP"/>
</dbReference>
<dbReference type="InterPro" id="IPR001179">
    <property type="entry name" value="PPIase_FKBP_dom"/>
</dbReference>
<dbReference type="PANTHER" id="PTHR46222:SF1">
    <property type="entry name" value="PEPTIDYL-PROLYL CIS-TRANS ISOMERASE FKBP14"/>
    <property type="match status" value="1"/>
</dbReference>
<dbReference type="PANTHER" id="PTHR46222">
    <property type="entry name" value="PEPTIDYL-PROLYL CIS-TRANS ISOMERASE FKBP7/14"/>
    <property type="match status" value="1"/>
</dbReference>
<dbReference type="Pfam" id="PF00254">
    <property type="entry name" value="FKBP_C"/>
    <property type="match status" value="1"/>
</dbReference>
<dbReference type="SUPFAM" id="SSF47473">
    <property type="entry name" value="EF-hand"/>
    <property type="match status" value="1"/>
</dbReference>
<dbReference type="SUPFAM" id="SSF54534">
    <property type="entry name" value="FKBP-like"/>
    <property type="match status" value="1"/>
</dbReference>
<dbReference type="PROSITE" id="PS00018">
    <property type="entry name" value="EF_HAND_1"/>
    <property type="match status" value="1"/>
</dbReference>
<dbReference type="PROSITE" id="PS50222">
    <property type="entry name" value="EF_HAND_2"/>
    <property type="match status" value="2"/>
</dbReference>
<dbReference type="PROSITE" id="PS00014">
    <property type="entry name" value="ER_TARGET"/>
    <property type="match status" value="1"/>
</dbReference>
<dbReference type="PROSITE" id="PS50059">
    <property type="entry name" value="FKBP_PPIASE"/>
    <property type="match status" value="1"/>
</dbReference>
<keyword id="KW-0106">Calcium</keyword>
<keyword id="KW-1015">Disulfide bond</keyword>
<keyword id="KW-0256">Endoplasmic reticulum</keyword>
<keyword id="KW-0325">Glycoprotein</keyword>
<keyword id="KW-0413">Isomerase</keyword>
<keyword id="KW-0479">Metal-binding</keyword>
<keyword id="KW-1185">Reference proteome</keyword>
<keyword id="KW-0677">Repeat</keyword>
<keyword id="KW-0697">Rotamase</keyword>
<keyword id="KW-0732">Signal</keyword>
<organism>
    <name type="scientific">Mus musculus</name>
    <name type="common">Mouse</name>
    <dbReference type="NCBI Taxonomy" id="10090"/>
    <lineage>
        <taxon>Eukaryota</taxon>
        <taxon>Metazoa</taxon>
        <taxon>Chordata</taxon>
        <taxon>Craniata</taxon>
        <taxon>Vertebrata</taxon>
        <taxon>Euteleostomi</taxon>
        <taxon>Mammalia</taxon>
        <taxon>Eutheria</taxon>
        <taxon>Euarchontoglires</taxon>
        <taxon>Glires</taxon>
        <taxon>Rodentia</taxon>
        <taxon>Myomorpha</taxon>
        <taxon>Muroidea</taxon>
        <taxon>Muridae</taxon>
        <taxon>Murinae</taxon>
        <taxon>Mus</taxon>
        <taxon>Mus</taxon>
    </lineage>
</organism>
<gene>
    <name type="primary">Fkbp14</name>
</gene>
<feature type="signal peptide" evidence="1">
    <location>
        <begin position="1"/>
        <end position="19"/>
    </location>
</feature>
<feature type="chain" id="PRO_0000025522" description="Peptidyl-prolyl cis-trans isomerase FKBP14">
    <location>
        <begin position="20"/>
        <end position="211"/>
    </location>
</feature>
<feature type="domain" description="PPIase FKBP-type" evidence="4">
    <location>
        <begin position="45"/>
        <end position="135"/>
    </location>
</feature>
<feature type="domain" description="EF-hand 1" evidence="5">
    <location>
        <begin position="135"/>
        <end position="170"/>
    </location>
</feature>
<feature type="domain" description="EF-hand 2" evidence="5">
    <location>
        <begin position="179"/>
        <end position="211"/>
    </location>
</feature>
<feature type="short sequence motif" description="Prevents secretion from ER" evidence="6">
    <location>
        <begin position="208"/>
        <end position="211"/>
    </location>
</feature>
<feature type="binding site" evidence="7">
    <location>
        <position position="148"/>
    </location>
    <ligand>
        <name>Ca(2+)</name>
        <dbReference type="ChEBI" id="CHEBI:29108"/>
        <label>1</label>
    </ligand>
</feature>
<feature type="binding site" evidence="7">
    <location>
        <position position="150"/>
    </location>
    <ligand>
        <name>Ca(2+)</name>
        <dbReference type="ChEBI" id="CHEBI:29108"/>
        <label>1</label>
    </ligand>
</feature>
<feature type="binding site" evidence="7">
    <location>
        <position position="152"/>
    </location>
    <ligand>
        <name>Ca(2+)</name>
        <dbReference type="ChEBI" id="CHEBI:29108"/>
        <label>1</label>
    </ligand>
</feature>
<feature type="binding site" evidence="7">
    <location>
        <position position="154"/>
    </location>
    <ligand>
        <name>Ca(2+)</name>
        <dbReference type="ChEBI" id="CHEBI:29108"/>
        <label>1</label>
    </ligand>
</feature>
<feature type="binding site" evidence="7">
    <location>
        <position position="159"/>
    </location>
    <ligand>
        <name>Ca(2+)</name>
        <dbReference type="ChEBI" id="CHEBI:29108"/>
        <label>1</label>
    </ligand>
</feature>
<feature type="binding site" evidence="5">
    <location>
        <position position="192"/>
    </location>
    <ligand>
        <name>Ca(2+)</name>
        <dbReference type="ChEBI" id="CHEBI:29108"/>
        <label>2</label>
    </ligand>
</feature>
<feature type="binding site" evidence="5">
    <location>
        <position position="194"/>
    </location>
    <ligand>
        <name>Ca(2+)</name>
        <dbReference type="ChEBI" id="CHEBI:29108"/>
        <label>2</label>
    </ligand>
</feature>
<feature type="binding site" evidence="5">
    <location>
        <position position="196"/>
    </location>
    <ligand>
        <name>Ca(2+)</name>
        <dbReference type="ChEBI" id="CHEBI:29108"/>
        <label>2</label>
    </ligand>
</feature>
<feature type="binding site" evidence="5">
    <location>
        <position position="203"/>
    </location>
    <ligand>
        <name>Ca(2+)</name>
        <dbReference type="ChEBI" id="CHEBI:29108"/>
        <label>2</label>
    </ligand>
</feature>
<feature type="glycosylation site" description="N-linked (GlcNAc...) asparagine" evidence="3">
    <location>
        <position position="176"/>
    </location>
</feature>
<feature type="disulfide bond" evidence="2">
    <location>
        <begin position="38"/>
        <end position="96"/>
    </location>
</feature>
<sequence length="211" mass="24252">MRFFLWNAILALWVTVLSGALIPEPEVKIEVLQKPFICHRKTKGGDLMLVHYEGYLEKDGSLFHSTHKHNNGQPVWFTLGILEVLKGWDQGLKGMCVGEKRKLTVPPALGYGKEGKGKIPPESTLIFNIDLLEIRNGPRSHESFQEMDLNDDWRLSKHEVKVYLQKEFEKHGAVVNESHHDALVEDIFDKEDEDKDGFISAREFTYVHDEL</sequence>
<evidence type="ECO:0000250" key="1"/>
<evidence type="ECO:0000250" key="2">
    <source>
        <dbReference type="UniProtKB" id="Q9NWM8"/>
    </source>
</evidence>
<evidence type="ECO:0000255" key="3"/>
<evidence type="ECO:0000255" key="4">
    <source>
        <dbReference type="PROSITE-ProRule" id="PRU00277"/>
    </source>
</evidence>
<evidence type="ECO:0000255" key="5">
    <source>
        <dbReference type="PROSITE-ProRule" id="PRU00448"/>
    </source>
</evidence>
<evidence type="ECO:0000255" key="6">
    <source>
        <dbReference type="PROSITE-ProRule" id="PRU10138"/>
    </source>
</evidence>
<evidence type="ECO:0000305" key="7"/>
<reference key="1">
    <citation type="journal article" date="2004" name="Genome Res.">
        <title>The status, quality, and expansion of the NIH full-length cDNA project: the Mammalian Gene Collection (MGC).</title>
        <authorList>
            <consortium name="The MGC Project Team"/>
        </authorList>
    </citation>
    <scope>NUCLEOTIDE SEQUENCE [LARGE SCALE MRNA]</scope>
    <source>
        <tissue>Mammary tumor</tissue>
    </source>
</reference>
<reference key="2">
    <citation type="journal article" date="2010" name="Cell">
        <title>A tissue-specific atlas of mouse protein phosphorylation and expression.</title>
        <authorList>
            <person name="Huttlin E.L."/>
            <person name="Jedrychowski M.P."/>
            <person name="Elias J.E."/>
            <person name="Goswami T."/>
            <person name="Rad R."/>
            <person name="Beausoleil S.A."/>
            <person name="Villen J."/>
            <person name="Haas W."/>
            <person name="Sowa M.E."/>
            <person name="Gygi S.P."/>
        </authorList>
    </citation>
    <scope>IDENTIFICATION BY MASS SPECTROMETRY [LARGE SCALE ANALYSIS]</scope>
    <source>
        <tissue>Testis</tissue>
    </source>
</reference>
<accession>P59024</accession>
<comment type="function">
    <text evidence="2">PPIase which accelerates the folding of proteins during protein synthesis. Has a preference for substrates containing 4-hydroxylproline modifications, including type III collagen. May also target type VI and type X collagens.</text>
</comment>
<comment type="catalytic activity">
    <reaction evidence="2">
        <text>[protein]-peptidylproline (omega=180) = [protein]-peptidylproline (omega=0)</text>
        <dbReference type="Rhea" id="RHEA:16237"/>
        <dbReference type="Rhea" id="RHEA-COMP:10747"/>
        <dbReference type="Rhea" id="RHEA-COMP:10748"/>
        <dbReference type="ChEBI" id="CHEBI:83833"/>
        <dbReference type="ChEBI" id="CHEBI:83834"/>
        <dbReference type="EC" id="5.2.1.8"/>
    </reaction>
</comment>
<comment type="activity regulation">
    <text evidence="2">Inhibited by tacrolimus/FK506.</text>
</comment>
<comment type="subunit">
    <text evidence="2">Monomer. Homodimer. Interacts with type III, type IV and type X collagens.</text>
</comment>
<comment type="subcellular location">
    <subcellularLocation>
        <location evidence="6">Endoplasmic reticulum lumen</location>
    </subcellularLocation>
</comment>